<evidence type="ECO:0000255" key="1">
    <source>
        <dbReference type="HAMAP-Rule" id="MF_01356"/>
    </source>
</evidence>
<evidence type="ECO:0000256" key="2">
    <source>
        <dbReference type="SAM" id="MobiDB-lite"/>
    </source>
</evidence>
<feature type="chain" id="PRO_0000376295" description="NADH-quinone oxidoreductase subunit B">
    <location>
        <begin position="1"/>
        <end position="198"/>
    </location>
</feature>
<feature type="region of interest" description="Disordered" evidence="2">
    <location>
        <begin position="1"/>
        <end position="29"/>
    </location>
</feature>
<feature type="compositionally biased region" description="Polar residues" evidence="2">
    <location>
        <begin position="1"/>
        <end position="20"/>
    </location>
</feature>
<feature type="binding site" evidence="1">
    <location>
        <position position="77"/>
    </location>
    <ligand>
        <name>[4Fe-4S] cluster</name>
        <dbReference type="ChEBI" id="CHEBI:49883"/>
    </ligand>
</feature>
<feature type="binding site" evidence="1">
    <location>
        <position position="78"/>
    </location>
    <ligand>
        <name>[4Fe-4S] cluster</name>
        <dbReference type="ChEBI" id="CHEBI:49883"/>
    </ligand>
</feature>
<feature type="binding site" evidence="1">
    <location>
        <position position="142"/>
    </location>
    <ligand>
        <name>[4Fe-4S] cluster</name>
        <dbReference type="ChEBI" id="CHEBI:49883"/>
    </ligand>
</feature>
<feature type="binding site" evidence="1">
    <location>
        <position position="172"/>
    </location>
    <ligand>
        <name>[4Fe-4S] cluster</name>
        <dbReference type="ChEBI" id="CHEBI:49883"/>
    </ligand>
</feature>
<organism>
    <name type="scientific">Afipia carboxidovorans (strain ATCC 49405 / DSM 1227 / KCTC 32145 / OM5)</name>
    <name type="common">Oligotropha carboxidovorans</name>
    <dbReference type="NCBI Taxonomy" id="504832"/>
    <lineage>
        <taxon>Bacteria</taxon>
        <taxon>Pseudomonadati</taxon>
        <taxon>Pseudomonadota</taxon>
        <taxon>Alphaproteobacteria</taxon>
        <taxon>Hyphomicrobiales</taxon>
        <taxon>Nitrobacteraceae</taxon>
        <taxon>Afipia</taxon>
    </lineage>
</organism>
<sequence length="198" mass="21738">MGLNPTQVSTSGSPQVSQPATGVLDPRTGQPVGADDRYFLEINHELSDKGFFVAAADDLITWARTGSLMWMTFGLACCAVEMMQVSMPRYDVERFGFAPRASPRQSDVMIVAGTLTNKMAPALRKVYDQMPEPRYVISMGSCANGGGYYHYSYSVVRGCDRIVPVDIYVPGCPPTAEALLYGVLLLQKKIRRIGTIER</sequence>
<gene>
    <name evidence="1" type="primary">nuoB</name>
    <name type="ordered locus">OCAR_5923</name>
    <name type="ordered locus">OCA5_c20980</name>
</gene>
<accession>B6JGW0</accession>
<accession>F8BWN7</accession>
<proteinExistence type="inferred from homology"/>
<reference key="1">
    <citation type="journal article" date="2008" name="J. Bacteriol.">
        <title>Genome sequence of the chemolithoautotrophic bacterium Oligotropha carboxidovorans OM5T.</title>
        <authorList>
            <person name="Paul D."/>
            <person name="Bridges S."/>
            <person name="Burgess S.C."/>
            <person name="Dandass Y."/>
            <person name="Lawrence M.L."/>
        </authorList>
    </citation>
    <scope>NUCLEOTIDE SEQUENCE [LARGE SCALE GENOMIC DNA]</scope>
    <source>
        <strain>ATCC 49405 / DSM 1227 / KCTC 32145 / OM5</strain>
    </source>
</reference>
<reference key="2">
    <citation type="journal article" date="2011" name="J. Bacteriol.">
        <title>Complete genome sequences of the chemolithoautotrophic Oligotropha carboxidovorans strains OM4 and OM5.</title>
        <authorList>
            <person name="Volland S."/>
            <person name="Rachinger M."/>
            <person name="Strittmatter A."/>
            <person name="Daniel R."/>
            <person name="Gottschalk G."/>
            <person name="Meyer O."/>
        </authorList>
    </citation>
    <scope>NUCLEOTIDE SEQUENCE [LARGE SCALE GENOMIC DNA]</scope>
    <source>
        <strain>ATCC 49405 / DSM 1227 / KCTC 32145 / OM5</strain>
    </source>
</reference>
<protein>
    <recommendedName>
        <fullName evidence="1">NADH-quinone oxidoreductase subunit B</fullName>
        <ecNumber evidence="1">7.1.1.-</ecNumber>
    </recommendedName>
    <alternativeName>
        <fullName evidence="1">NADH dehydrogenase I subunit B</fullName>
    </alternativeName>
    <alternativeName>
        <fullName evidence="1">NDH-1 subunit B</fullName>
    </alternativeName>
</protein>
<comment type="function">
    <text evidence="1">NDH-1 shuttles electrons from NADH, via FMN and iron-sulfur (Fe-S) centers, to quinones in the respiratory chain. The immediate electron acceptor for the enzyme in this species is believed to be ubiquinone. Couples the redox reaction to proton translocation (for every two electrons transferred, four hydrogen ions are translocated across the cytoplasmic membrane), and thus conserves the redox energy in a proton gradient.</text>
</comment>
<comment type="catalytic activity">
    <reaction evidence="1">
        <text>a quinone + NADH + 5 H(+)(in) = a quinol + NAD(+) + 4 H(+)(out)</text>
        <dbReference type="Rhea" id="RHEA:57888"/>
        <dbReference type="ChEBI" id="CHEBI:15378"/>
        <dbReference type="ChEBI" id="CHEBI:24646"/>
        <dbReference type="ChEBI" id="CHEBI:57540"/>
        <dbReference type="ChEBI" id="CHEBI:57945"/>
        <dbReference type="ChEBI" id="CHEBI:132124"/>
    </reaction>
</comment>
<comment type="cofactor">
    <cofactor evidence="1">
        <name>[4Fe-4S] cluster</name>
        <dbReference type="ChEBI" id="CHEBI:49883"/>
    </cofactor>
    <text evidence="1">Binds 1 [4Fe-4S] cluster.</text>
</comment>
<comment type="subunit">
    <text evidence="1">NDH-1 is composed of 14 different subunits. Subunits NuoB, C, D, E, F, and G constitute the peripheral sector of the complex.</text>
</comment>
<comment type="subcellular location">
    <subcellularLocation>
        <location evidence="1">Cell inner membrane</location>
        <topology evidence="1">Peripheral membrane protein</topology>
        <orientation evidence="1">Cytoplasmic side</orientation>
    </subcellularLocation>
</comment>
<comment type="similarity">
    <text evidence="1">Belongs to the complex I 20 kDa subunit family.</text>
</comment>
<name>NUOB_AFIC5</name>
<keyword id="KW-0004">4Fe-4S</keyword>
<keyword id="KW-0997">Cell inner membrane</keyword>
<keyword id="KW-1003">Cell membrane</keyword>
<keyword id="KW-0408">Iron</keyword>
<keyword id="KW-0411">Iron-sulfur</keyword>
<keyword id="KW-0472">Membrane</keyword>
<keyword id="KW-0479">Metal-binding</keyword>
<keyword id="KW-0520">NAD</keyword>
<keyword id="KW-0874">Quinone</keyword>
<keyword id="KW-1185">Reference proteome</keyword>
<keyword id="KW-1278">Translocase</keyword>
<keyword id="KW-0813">Transport</keyword>
<keyword id="KW-0830">Ubiquinone</keyword>
<dbReference type="EC" id="7.1.1.-" evidence="1"/>
<dbReference type="EMBL" id="CP001196">
    <property type="protein sequence ID" value="ACI93044.1"/>
    <property type="molecule type" value="Genomic_DNA"/>
</dbReference>
<dbReference type="EMBL" id="CP002826">
    <property type="protein sequence ID" value="AEI06805.1"/>
    <property type="molecule type" value="Genomic_DNA"/>
</dbReference>
<dbReference type="RefSeq" id="WP_012563071.1">
    <property type="nucleotide sequence ID" value="NC_015684.1"/>
</dbReference>
<dbReference type="SMR" id="B6JGW0"/>
<dbReference type="STRING" id="504832.OCA5_c20980"/>
<dbReference type="KEGG" id="oca:OCAR_5923"/>
<dbReference type="KEGG" id="ocg:OCA5_c20980"/>
<dbReference type="PATRIC" id="fig|504832.7.peg.2220"/>
<dbReference type="eggNOG" id="COG0377">
    <property type="taxonomic scope" value="Bacteria"/>
</dbReference>
<dbReference type="HOGENOM" id="CLU_055737_7_0_5"/>
<dbReference type="OrthoDB" id="9786737at2"/>
<dbReference type="Proteomes" id="UP000007730">
    <property type="component" value="Chromosome"/>
</dbReference>
<dbReference type="GO" id="GO:0005886">
    <property type="term" value="C:plasma membrane"/>
    <property type="evidence" value="ECO:0007669"/>
    <property type="project" value="UniProtKB-SubCell"/>
</dbReference>
<dbReference type="GO" id="GO:0045271">
    <property type="term" value="C:respiratory chain complex I"/>
    <property type="evidence" value="ECO:0007669"/>
    <property type="project" value="TreeGrafter"/>
</dbReference>
<dbReference type="GO" id="GO:0051539">
    <property type="term" value="F:4 iron, 4 sulfur cluster binding"/>
    <property type="evidence" value="ECO:0007669"/>
    <property type="project" value="UniProtKB-KW"/>
</dbReference>
<dbReference type="GO" id="GO:0005506">
    <property type="term" value="F:iron ion binding"/>
    <property type="evidence" value="ECO:0007669"/>
    <property type="project" value="UniProtKB-UniRule"/>
</dbReference>
<dbReference type="GO" id="GO:0008137">
    <property type="term" value="F:NADH dehydrogenase (ubiquinone) activity"/>
    <property type="evidence" value="ECO:0007669"/>
    <property type="project" value="InterPro"/>
</dbReference>
<dbReference type="GO" id="GO:0050136">
    <property type="term" value="F:NADH:ubiquinone reductase (non-electrogenic) activity"/>
    <property type="evidence" value="ECO:0007669"/>
    <property type="project" value="UniProtKB-UniRule"/>
</dbReference>
<dbReference type="GO" id="GO:0048038">
    <property type="term" value="F:quinone binding"/>
    <property type="evidence" value="ECO:0007669"/>
    <property type="project" value="UniProtKB-KW"/>
</dbReference>
<dbReference type="GO" id="GO:0009060">
    <property type="term" value="P:aerobic respiration"/>
    <property type="evidence" value="ECO:0007669"/>
    <property type="project" value="TreeGrafter"/>
</dbReference>
<dbReference type="GO" id="GO:0015990">
    <property type="term" value="P:electron transport coupled proton transport"/>
    <property type="evidence" value="ECO:0007669"/>
    <property type="project" value="TreeGrafter"/>
</dbReference>
<dbReference type="FunFam" id="3.40.50.12280:FF:000001">
    <property type="entry name" value="NADH-quinone oxidoreductase subunit B 2"/>
    <property type="match status" value="1"/>
</dbReference>
<dbReference type="Gene3D" id="3.40.50.12280">
    <property type="match status" value="1"/>
</dbReference>
<dbReference type="HAMAP" id="MF_01356">
    <property type="entry name" value="NDH1_NuoB"/>
    <property type="match status" value="1"/>
</dbReference>
<dbReference type="InterPro" id="IPR006137">
    <property type="entry name" value="NADH_UbQ_OxRdtase-like_20kDa"/>
</dbReference>
<dbReference type="InterPro" id="IPR006138">
    <property type="entry name" value="NADH_UQ_OxRdtase_20Kd_su"/>
</dbReference>
<dbReference type="NCBIfam" id="TIGR01957">
    <property type="entry name" value="nuoB_fam"/>
    <property type="match status" value="1"/>
</dbReference>
<dbReference type="NCBIfam" id="NF005012">
    <property type="entry name" value="PRK06411.1"/>
    <property type="match status" value="1"/>
</dbReference>
<dbReference type="PANTHER" id="PTHR11995">
    <property type="entry name" value="NADH DEHYDROGENASE"/>
    <property type="match status" value="1"/>
</dbReference>
<dbReference type="PANTHER" id="PTHR11995:SF14">
    <property type="entry name" value="NADH DEHYDROGENASE [UBIQUINONE] IRON-SULFUR PROTEIN 7, MITOCHONDRIAL"/>
    <property type="match status" value="1"/>
</dbReference>
<dbReference type="Pfam" id="PF01058">
    <property type="entry name" value="Oxidored_q6"/>
    <property type="match status" value="1"/>
</dbReference>
<dbReference type="SUPFAM" id="SSF56770">
    <property type="entry name" value="HydA/Nqo6-like"/>
    <property type="match status" value="1"/>
</dbReference>
<dbReference type="PROSITE" id="PS01150">
    <property type="entry name" value="COMPLEX1_20K"/>
    <property type="match status" value="1"/>
</dbReference>